<evidence type="ECO:0000255" key="1">
    <source>
        <dbReference type="HAMAP-Rule" id="MF_01322"/>
    </source>
</evidence>
<sequence length="1393" mass="155021">MFGEGSRDNAALSKERLFDKLEIGIASDITIRDKWSCGEIKKPETINYRTFKPEKGGLFCEKIFGPTKDWECCCGKYKKIKHKGIVCDRCGVEVTLSKVRRERMAHIELAVPIVHIWFFKTTPSRIGNVLGMTASDLERIIYYEEYVVIDPGKTDLNKKQLLNDAQYREVVEKWGKDSFVAKMGGEAIYDLLKSEDLQSLLKELKDRLRKTKSQQARMKLAKRLKIIEGFVSSSNNPEWMVLKSIPVVPPDLRPLVPLDGGRFATSDLNDLYRRVINRNNRLKAILRLKTPEVIVRNEKRMLQEAVDALFDNGRHGHPVMGAGNRPLKSLSEMLKGKNGRFRQNLLGKRVDYSGRSVIIVGPELKFNQCGLPKEMALELFEPFIIKRLKDQGSVYTIRSAKKMIQRGAPEVWDVLEEIIKGHPVLLNRAPTLHRLGIQAFEPVLIEGKAIRVHPLVCAAFNADFDGDQMAVHVPLSIEAQLEAKVLMMAPDNIFLPSSGKPVATPSKDMTLGIYYLMADPTYFPEDHGGKIKIFKDVAEVLRALYAGGFLDDRIDNRRDETGRGIHIHEKIKVRIDGQIIETTPGRVLFNRIVPKELGFQNYSMPSKRISELILQCYKKVGLEATVRFLDDLKDLGFIQATKAAISMGLKDVRIPEIKSDILKEAYDKVAVVKKQYDDGIITDGERHSKTISIWTEVSESLSDALYVEISKQTKSKHNPLYLMIDSGARGNKSQLKQLGALRGLMAKPNGAIIESPITSNFREGLTVLEYSISSHGARKGLADTALKTADSGYLTRRLVDVAQDVIITEKDCGTLNHIEISAIRQGSEELLPLKDRIYGRTVAEDIYQPGDKSKLLAKNGDVITSAQAELIDDAGIESIKIRSTLTCESRRGVCAKCYGLNLANGRLIGLGEAVGIIAAQSIGEPGTQLTMRTFHLGGIAATSSTPEIVTDCDGVLVYMDLRVVVGQDGNHLVLNKKGAIHVVRDEGRSLEEYKKLLSTKSIESLETYPVELGVKILVGDGEKVSAGQRIAEVELHNIPIICDKPGFVKYEDLVEGISTEKVVNKNTGLVELIVKQHRGELHPQIAIYSDAGLTELVGTYAIPSGAIISVEENQKVDPGMLLARLPRGAIKTKDITGGLPRVAELVEARKPEDAADIAKIDGVVDFKGIQKNKRILVVRDEITGMEEEHLIPLTKHLIVQRGDTVMKGQQLTDGLVVPHEILEICGVRELQKYLVNEVQEVYRLQGVDINDKHIEIIVRQMLQKVRITDPGDTTLLFGEEVNKKEFYEENRRTEEDGGKPAQAVPVLLGITKASLGTESFISAASFQDTTRVLTEAACSSKTDYLLGFKENVIMGHMIPGGTGFDTHKRIKQYLEKEQEDLVFDFVSESECAC</sequence>
<name>RPOC_CHLFF</name>
<reference key="1">
    <citation type="journal article" date="2006" name="DNA Res.">
        <title>Genome sequence of the cat pathogen, Chlamydophila felis.</title>
        <authorList>
            <person name="Azuma Y."/>
            <person name="Hirakawa H."/>
            <person name="Yamashita A."/>
            <person name="Cai Y."/>
            <person name="Rahman M.A."/>
            <person name="Suzuki H."/>
            <person name="Mitaku S."/>
            <person name="Toh H."/>
            <person name="Goto S."/>
            <person name="Murakami T."/>
            <person name="Sugi K."/>
            <person name="Hayashi H."/>
            <person name="Fukushi H."/>
            <person name="Hattori M."/>
            <person name="Kuhara S."/>
            <person name="Shirai M."/>
        </authorList>
    </citation>
    <scope>NUCLEOTIDE SEQUENCE [LARGE SCALE GENOMIC DNA]</scope>
    <source>
        <strain>Fe/C-56</strain>
    </source>
</reference>
<gene>
    <name evidence="1" type="primary">rpoC</name>
    <name type="ordered locus">CF0321</name>
</gene>
<feature type="chain" id="PRO_0000240800" description="DNA-directed RNA polymerase subunit beta'">
    <location>
        <begin position="1"/>
        <end position="1393"/>
    </location>
</feature>
<feature type="binding site" evidence="1">
    <location>
        <position position="72"/>
    </location>
    <ligand>
        <name>Zn(2+)</name>
        <dbReference type="ChEBI" id="CHEBI:29105"/>
        <label>1</label>
    </ligand>
</feature>
<feature type="binding site" evidence="1">
    <location>
        <position position="74"/>
    </location>
    <ligand>
        <name>Zn(2+)</name>
        <dbReference type="ChEBI" id="CHEBI:29105"/>
        <label>1</label>
    </ligand>
</feature>
<feature type="binding site" evidence="1">
    <location>
        <position position="87"/>
    </location>
    <ligand>
        <name>Zn(2+)</name>
        <dbReference type="ChEBI" id="CHEBI:29105"/>
        <label>1</label>
    </ligand>
</feature>
<feature type="binding site" evidence="1">
    <location>
        <position position="90"/>
    </location>
    <ligand>
        <name>Zn(2+)</name>
        <dbReference type="ChEBI" id="CHEBI:29105"/>
        <label>1</label>
    </ligand>
</feature>
<feature type="binding site" evidence="1">
    <location>
        <position position="463"/>
    </location>
    <ligand>
        <name>Mg(2+)</name>
        <dbReference type="ChEBI" id="CHEBI:18420"/>
    </ligand>
</feature>
<feature type="binding site" evidence="1">
    <location>
        <position position="465"/>
    </location>
    <ligand>
        <name>Mg(2+)</name>
        <dbReference type="ChEBI" id="CHEBI:18420"/>
    </ligand>
</feature>
<feature type="binding site" evidence="1">
    <location>
        <position position="467"/>
    </location>
    <ligand>
        <name>Mg(2+)</name>
        <dbReference type="ChEBI" id="CHEBI:18420"/>
    </ligand>
</feature>
<feature type="binding site" evidence="1">
    <location>
        <position position="812"/>
    </location>
    <ligand>
        <name>Zn(2+)</name>
        <dbReference type="ChEBI" id="CHEBI:29105"/>
        <label>2</label>
    </ligand>
</feature>
<feature type="binding site" evidence="1">
    <location>
        <position position="887"/>
    </location>
    <ligand>
        <name>Zn(2+)</name>
        <dbReference type="ChEBI" id="CHEBI:29105"/>
        <label>2</label>
    </ligand>
</feature>
<feature type="binding site" evidence="1">
    <location>
        <position position="894"/>
    </location>
    <ligand>
        <name>Zn(2+)</name>
        <dbReference type="ChEBI" id="CHEBI:29105"/>
        <label>2</label>
    </ligand>
</feature>
<feature type="binding site" evidence="1">
    <location>
        <position position="897"/>
    </location>
    <ligand>
        <name>Zn(2+)</name>
        <dbReference type="ChEBI" id="CHEBI:29105"/>
        <label>2</label>
    </ligand>
</feature>
<keyword id="KW-0240">DNA-directed RNA polymerase</keyword>
<keyword id="KW-0460">Magnesium</keyword>
<keyword id="KW-0479">Metal-binding</keyword>
<keyword id="KW-0548">Nucleotidyltransferase</keyword>
<keyword id="KW-0804">Transcription</keyword>
<keyword id="KW-0808">Transferase</keyword>
<keyword id="KW-0862">Zinc</keyword>
<organism>
    <name type="scientific">Chlamydia felis (strain Fe/C-56)</name>
    <name type="common">Chlamydophila felis</name>
    <dbReference type="NCBI Taxonomy" id="264202"/>
    <lineage>
        <taxon>Bacteria</taxon>
        <taxon>Pseudomonadati</taxon>
        <taxon>Chlamydiota</taxon>
        <taxon>Chlamydiia</taxon>
        <taxon>Chlamydiales</taxon>
        <taxon>Chlamydiaceae</taxon>
        <taxon>Chlamydia/Chlamydophila group</taxon>
        <taxon>Chlamydia</taxon>
    </lineage>
</organism>
<proteinExistence type="inferred from homology"/>
<protein>
    <recommendedName>
        <fullName evidence="1">DNA-directed RNA polymerase subunit beta'</fullName>
        <shortName evidence="1">RNAP subunit beta'</shortName>
        <ecNumber evidence="1">2.7.7.6</ecNumber>
    </recommendedName>
    <alternativeName>
        <fullName evidence="1">RNA polymerase subunit beta'</fullName>
    </alternativeName>
    <alternativeName>
        <fullName evidence="1">Transcriptase subunit beta'</fullName>
    </alternativeName>
</protein>
<dbReference type="EC" id="2.7.7.6" evidence="1"/>
<dbReference type="EMBL" id="AP006861">
    <property type="protein sequence ID" value="BAE81093.1"/>
    <property type="molecule type" value="Genomic_DNA"/>
</dbReference>
<dbReference type="RefSeq" id="WP_011457873.1">
    <property type="nucleotide sequence ID" value="NC_007899.1"/>
</dbReference>
<dbReference type="SMR" id="Q255E5"/>
<dbReference type="STRING" id="264202.CF0321"/>
<dbReference type="KEGG" id="cfe:CF0321"/>
<dbReference type="eggNOG" id="COG0086">
    <property type="taxonomic scope" value="Bacteria"/>
</dbReference>
<dbReference type="HOGENOM" id="CLU_000524_3_1_0"/>
<dbReference type="OrthoDB" id="9815296at2"/>
<dbReference type="Proteomes" id="UP000001260">
    <property type="component" value="Chromosome"/>
</dbReference>
<dbReference type="GO" id="GO:0000428">
    <property type="term" value="C:DNA-directed RNA polymerase complex"/>
    <property type="evidence" value="ECO:0007669"/>
    <property type="project" value="UniProtKB-KW"/>
</dbReference>
<dbReference type="GO" id="GO:0003677">
    <property type="term" value="F:DNA binding"/>
    <property type="evidence" value="ECO:0007669"/>
    <property type="project" value="UniProtKB-UniRule"/>
</dbReference>
<dbReference type="GO" id="GO:0003899">
    <property type="term" value="F:DNA-directed RNA polymerase activity"/>
    <property type="evidence" value="ECO:0007669"/>
    <property type="project" value="UniProtKB-UniRule"/>
</dbReference>
<dbReference type="GO" id="GO:0000287">
    <property type="term" value="F:magnesium ion binding"/>
    <property type="evidence" value="ECO:0007669"/>
    <property type="project" value="UniProtKB-UniRule"/>
</dbReference>
<dbReference type="GO" id="GO:0008270">
    <property type="term" value="F:zinc ion binding"/>
    <property type="evidence" value="ECO:0007669"/>
    <property type="project" value="UniProtKB-UniRule"/>
</dbReference>
<dbReference type="GO" id="GO:0006351">
    <property type="term" value="P:DNA-templated transcription"/>
    <property type="evidence" value="ECO:0007669"/>
    <property type="project" value="UniProtKB-UniRule"/>
</dbReference>
<dbReference type="CDD" id="cd02655">
    <property type="entry name" value="RNAP_beta'_C"/>
    <property type="match status" value="1"/>
</dbReference>
<dbReference type="CDD" id="cd01609">
    <property type="entry name" value="RNAP_beta'_N"/>
    <property type="match status" value="1"/>
</dbReference>
<dbReference type="Gene3D" id="1.10.132.30">
    <property type="match status" value="1"/>
</dbReference>
<dbReference type="Gene3D" id="1.10.150.390">
    <property type="match status" value="1"/>
</dbReference>
<dbReference type="Gene3D" id="1.10.1790.20">
    <property type="match status" value="1"/>
</dbReference>
<dbReference type="Gene3D" id="1.10.40.90">
    <property type="match status" value="1"/>
</dbReference>
<dbReference type="Gene3D" id="2.40.40.20">
    <property type="match status" value="1"/>
</dbReference>
<dbReference type="Gene3D" id="2.40.50.100">
    <property type="match status" value="3"/>
</dbReference>
<dbReference type="Gene3D" id="4.10.860.120">
    <property type="entry name" value="RNA polymerase II, clamp domain"/>
    <property type="match status" value="1"/>
</dbReference>
<dbReference type="Gene3D" id="1.10.274.100">
    <property type="entry name" value="RNA polymerase Rpb1, domain 3"/>
    <property type="match status" value="1"/>
</dbReference>
<dbReference type="HAMAP" id="MF_01322">
    <property type="entry name" value="RNApol_bact_RpoC"/>
    <property type="match status" value="1"/>
</dbReference>
<dbReference type="InterPro" id="IPR045867">
    <property type="entry name" value="DNA-dir_RpoC_beta_prime"/>
</dbReference>
<dbReference type="InterPro" id="IPR012754">
    <property type="entry name" value="DNA-dir_RpoC_beta_prime_bact"/>
</dbReference>
<dbReference type="InterPro" id="IPR000722">
    <property type="entry name" value="RNA_pol_asu"/>
</dbReference>
<dbReference type="InterPro" id="IPR006592">
    <property type="entry name" value="RNA_pol_N"/>
</dbReference>
<dbReference type="InterPro" id="IPR007080">
    <property type="entry name" value="RNA_pol_Rpb1_1"/>
</dbReference>
<dbReference type="InterPro" id="IPR007066">
    <property type="entry name" value="RNA_pol_Rpb1_3"/>
</dbReference>
<dbReference type="InterPro" id="IPR042102">
    <property type="entry name" value="RNA_pol_Rpb1_3_sf"/>
</dbReference>
<dbReference type="InterPro" id="IPR007083">
    <property type="entry name" value="RNA_pol_Rpb1_4"/>
</dbReference>
<dbReference type="InterPro" id="IPR007081">
    <property type="entry name" value="RNA_pol_Rpb1_5"/>
</dbReference>
<dbReference type="InterPro" id="IPR044893">
    <property type="entry name" value="RNA_pol_Rpb1_clamp_domain"/>
</dbReference>
<dbReference type="InterPro" id="IPR038120">
    <property type="entry name" value="Rpb1_funnel_sf"/>
</dbReference>
<dbReference type="NCBIfam" id="TIGR02386">
    <property type="entry name" value="rpoC_TIGR"/>
    <property type="match status" value="1"/>
</dbReference>
<dbReference type="PANTHER" id="PTHR19376">
    <property type="entry name" value="DNA-DIRECTED RNA POLYMERASE"/>
    <property type="match status" value="1"/>
</dbReference>
<dbReference type="PANTHER" id="PTHR19376:SF54">
    <property type="entry name" value="DNA-DIRECTED RNA POLYMERASE SUBUNIT BETA"/>
    <property type="match status" value="1"/>
</dbReference>
<dbReference type="Pfam" id="PF04997">
    <property type="entry name" value="RNA_pol_Rpb1_1"/>
    <property type="match status" value="1"/>
</dbReference>
<dbReference type="Pfam" id="PF00623">
    <property type="entry name" value="RNA_pol_Rpb1_2"/>
    <property type="match status" value="1"/>
</dbReference>
<dbReference type="Pfam" id="PF04983">
    <property type="entry name" value="RNA_pol_Rpb1_3"/>
    <property type="match status" value="1"/>
</dbReference>
<dbReference type="Pfam" id="PF05000">
    <property type="entry name" value="RNA_pol_Rpb1_4"/>
    <property type="match status" value="1"/>
</dbReference>
<dbReference type="Pfam" id="PF04998">
    <property type="entry name" value="RNA_pol_Rpb1_5"/>
    <property type="match status" value="1"/>
</dbReference>
<dbReference type="SMART" id="SM00663">
    <property type="entry name" value="RPOLA_N"/>
    <property type="match status" value="1"/>
</dbReference>
<dbReference type="SUPFAM" id="SSF64484">
    <property type="entry name" value="beta and beta-prime subunits of DNA dependent RNA-polymerase"/>
    <property type="match status" value="1"/>
</dbReference>
<accession>Q255E5</accession>
<comment type="function">
    <text evidence="1">DNA-dependent RNA polymerase catalyzes the transcription of DNA into RNA using the four ribonucleoside triphosphates as substrates.</text>
</comment>
<comment type="catalytic activity">
    <reaction evidence="1">
        <text>RNA(n) + a ribonucleoside 5'-triphosphate = RNA(n+1) + diphosphate</text>
        <dbReference type="Rhea" id="RHEA:21248"/>
        <dbReference type="Rhea" id="RHEA-COMP:14527"/>
        <dbReference type="Rhea" id="RHEA-COMP:17342"/>
        <dbReference type="ChEBI" id="CHEBI:33019"/>
        <dbReference type="ChEBI" id="CHEBI:61557"/>
        <dbReference type="ChEBI" id="CHEBI:140395"/>
        <dbReference type="EC" id="2.7.7.6"/>
    </reaction>
</comment>
<comment type="cofactor">
    <cofactor evidence="1">
        <name>Mg(2+)</name>
        <dbReference type="ChEBI" id="CHEBI:18420"/>
    </cofactor>
    <text evidence="1">Binds 1 Mg(2+) ion per subunit.</text>
</comment>
<comment type="cofactor">
    <cofactor evidence="1">
        <name>Zn(2+)</name>
        <dbReference type="ChEBI" id="CHEBI:29105"/>
    </cofactor>
    <text evidence="1">Binds 2 Zn(2+) ions per subunit.</text>
</comment>
<comment type="subunit">
    <text evidence="1">The RNAP catalytic core consists of 2 alpha, 1 beta, 1 beta' and 1 omega subunit. When a sigma factor is associated with the core the holoenzyme is formed, which can initiate transcription.</text>
</comment>
<comment type="similarity">
    <text evidence="1">Belongs to the RNA polymerase beta' chain family.</text>
</comment>